<reference key="1">
    <citation type="journal article" date="2004" name="Nat. Genet.">
        <title>Complete sequencing and characterization of 21,243 full-length human cDNAs.</title>
        <authorList>
            <person name="Ota T."/>
            <person name="Suzuki Y."/>
            <person name="Nishikawa T."/>
            <person name="Otsuki T."/>
            <person name="Sugiyama T."/>
            <person name="Irie R."/>
            <person name="Wakamatsu A."/>
            <person name="Hayashi K."/>
            <person name="Sato H."/>
            <person name="Nagai K."/>
            <person name="Kimura K."/>
            <person name="Makita H."/>
            <person name="Sekine M."/>
            <person name="Obayashi M."/>
            <person name="Nishi T."/>
            <person name="Shibahara T."/>
            <person name="Tanaka T."/>
            <person name="Ishii S."/>
            <person name="Yamamoto J."/>
            <person name="Saito K."/>
            <person name="Kawai Y."/>
            <person name="Isono Y."/>
            <person name="Nakamura Y."/>
            <person name="Nagahari K."/>
            <person name="Murakami K."/>
            <person name="Yasuda T."/>
            <person name="Iwayanagi T."/>
            <person name="Wagatsuma M."/>
            <person name="Shiratori A."/>
            <person name="Sudo H."/>
            <person name="Hosoiri T."/>
            <person name="Kaku Y."/>
            <person name="Kodaira H."/>
            <person name="Kondo H."/>
            <person name="Sugawara M."/>
            <person name="Takahashi M."/>
            <person name="Kanda K."/>
            <person name="Yokoi T."/>
            <person name="Furuya T."/>
            <person name="Kikkawa E."/>
            <person name="Omura Y."/>
            <person name="Abe K."/>
            <person name="Kamihara K."/>
            <person name="Katsuta N."/>
            <person name="Sato K."/>
            <person name="Tanikawa M."/>
            <person name="Yamazaki M."/>
            <person name="Ninomiya K."/>
            <person name="Ishibashi T."/>
            <person name="Yamashita H."/>
            <person name="Murakawa K."/>
            <person name="Fujimori K."/>
            <person name="Tanai H."/>
            <person name="Kimata M."/>
            <person name="Watanabe M."/>
            <person name="Hiraoka S."/>
            <person name="Chiba Y."/>
            <person name="Ishida S."/>
            <person name="Ono Y."/>
            <person name="Takiguchi S."/>
            <person name="Watanabe S."/>
            <person name="Yosida M."/>
            <person name="Hotuta T."/>
            <person name="Kusano J."/>
            <person name="Kanehori K."/>
            <person name="Takahashi-Fujii A."/>
            <person name="Hara H."/>
            <person name="Tanase T.-O."/>
            <person name="Nomura Y."/>
            <person name="Togiya S."/>
            <person name="Komai F."/>
            <person name="Hara R."/>
            <person name="Takeuchi K."/>
            <person name="Arita M."/>
            <person name="Imose N."/>
            <person name="Musashino K."/>
            <person name="Yuuki H."/>
            <person name="Oshima A."/>
            <person name="Sasaki N."/>
            <person name="Aotsuka S."/>
            <person name="Yoshikawa Y."/>
            <person name="Matsunawa H."/>
            <person name="Ichihara T."/>
            <person name="Shiohata N."/>
            <person name="Sano S."/>
            <person name="Moriya S."/>
            <person name="Momiyama H."/>
            <person name="Satoh N."/>
            <person name="Takami S."/>
            <person name="Terashima Y."/>
            <person name="Suzuki O."/>
            <person name="Nakagawa S."/>
            <person name="Senoh A."/>
            <person name="Mizoguchi H."/>
            <person name="Goto Y."/>
            <person name="Shimizu F."/>
            <person name="Wakebe H."/>
            <person name="Hishigaki H."/>
            <person name="Watanabe T."/>
            <person name="Sugiyama A."/>
            <person name="Takemoto M."/>
            <person name="Kawakami B."/>
            <person name="Yamazaki M."/>
            <person name="Watanabe K."/>
            <person name="Kumagai A."/>
            <person name="Itakura S."/>
            <person name="Fukuzumi Y."/>
            <person name="Fujimori Y."/>
            <person name="Komiyama M."/>
            <person name="Tashiro H."/>
            <person name="Tanigami A."/>
            <person name="Fujiwara T."/>
            <person name="Ono T."/>
            <person name="Yamada K."/>
            <person name="Fujii Y."/>
            <person name="Ozaki K."/>
            <person name="Hirao M."/>
            <person name="Ohmori Y."/>
            <person name="Kawabata A."/>
            <person name="Hikiji T."/>
            <person name="Kobatake N."/>
            <person name="Inagaki H."/>
            <person name="Ikema Y."/>
            <person name="Okamoto S."/>
            <person name="Okitani R."/>
            <person name="Kawakami T."/>
            <person name="Noguchi S."/>
            <person name="Itoh T."/>
            <person name="Shigeta K."/>
            <person name="Senba T."/>
            <person name="Matsumura K."/>
            <person name="Nakajima Y."/>
            <person name="Mizuno T."/>
            <person name="Morinaga M."/>
            <person name="Sasaki M."/>
            <person name="Togashi T."/>
            <person name="Oyama M."/>
            <person name="Hata H."/>
            <person name="Watanabe M."/>
            <person name="Komatsu T."/>
            <person name="Mizushima-Sugano J."/>
            <person name="Satoh T."/>
            <person name="Shirai Y."/>
            <person name="Takahashi Y."/>
            <person name="Nakagawa K."/>
            <person name="Okumura K."/>
            <person name="Nagase T."/>
            <person name="Nomura N."/>
            <person name="Kikuchi H."/>
            <person name="Masuho Y."/>
            <person name="Yamashita R."/>
            <person name="Nakai K."/>
            <person name="Yada T."/>
            <person name="Nakamura Y."/>
            <person name="Ohara O."/>
            <person name="Isogai T."/>
            <person name="Sugano S."/>
        </authorList>
    </citation>
    <scope>NUCLEOTIDE SEQUENCE [LARGE SCALE MRNA]</scope>
    <source>
        <tissue>Testis</tissue>
    </source>
</reference>
<reference key="2">
    <citation type="journal article" date="2006" name="Nature">
        <title>Human chromosome 11 DNA sequence and analysis including novel gene identification.</title>
        <authorList>
            <person name="Taylor T.D."/>
            <person name="Noguchi H."/>
            <person name="Totoki Y."/>
            <person name="Toyoda A."/>
            <person name="Kuroki Y."/>
            <person name="Dewar K."/>
            <person name="Lloyd C."/>
            <person name="Itoh T."/>
            <person name="Takeda T."/>
            <person name="Kim D.-W."/>
            <person name="She X."/>
            <person name="Barlow K.F."/>
            <person name="Bloom T."/>
            <person name="Bruford E."/>
            <person name="Chang J.L."/>
            <person name="Cuomo C.A."/>
            <person name="Eichler E."/>
            <person name="FitzGerald M.G."/>
            <person name="Jaffe D.B."/>
            <person name="LaButti K."/>
            <person name="Nicol R."/>
            <person name="Park H.-S."/>
            <person name="Seaman C."/>
            <person name="Sougnez C."/>
            <person name="Yang X."/>
            <person name="Zimmer A.R."/>
            <person name="Zody M.C."/>
            <person name="Birren B.W."/>
            <person name="Nusbaum C."/>
            <person name="Fujiyama A."/>
            <person name="Hattori M."/>
            <person name="Rogers J."/>
            <person name="Lander E.S."/>
            <person name="Sakaki Y."/>
        </authorList>
    </citation>
    <scope>NUCLEOTIDE SEQUENCE [LARGE SCALE GENOMIC DNA]</scope>
</reference>
<reference key="3">
    <citation type="journal article" date="2004" name="Genome Res.">
        <title>The status, quality, and expansion of the NIH full-length cDNA project: the Mammalian Gene Collection (MGC).</title>
        <authorList>
            <consortium name="The MGC Project Team"/>
        </authorList>
    </citation>
    <scope>NUCLEOTIDE SEQUENCE [LARGE SCALE MRNA]</scope>
    <source>
        <tissue>Testis</tissue>
    </source>
</reference>
<reference key="4">
    <citation type="journal article" date="2022" name="Nat. Commun.">
        <title>Single-cell transcriptome and translatome dual-omics reveals potential mechanisms of human oocyte maturation.</title>
        <authorList>
            <person name="Hu W."/>
            <person name="Zeng H."/>
            <person name="Shi Y."/>
            <person name="Zhou C."/>
            <person name="Huang J."/>
            <person name="Jia L."/>
            <person name="Xu S."/>
            <person name="Feng X."/>
            <person name="Zeng Y."/>
            <person name="Xiong T."/>
            <person name="Huang W."/>
            <person name="Sun P."/>
            <person name="Chang Y."/>
            <person name="Li T."/>
            <person name="Fang C."/>
            <person name="Wu K."/>
            <person name="Cai L."/>
            <person name="Ni W."/>
            <person name="Li Y."/>
            <person name="Yang Z."/>
            <person name="Zhang Q.C."/>
            <person name="Chian R."/>
            <person name="Chen Z."/>
            <person name="Liang X."/>
            <person name="Kee K."/>
        </authorList>
    </citation>
    <scope>FUNCTION</scope>
    <scope>SUBCELLULAR LOCATION</scope>
    <scope>TISSUE SPECIFICITY</scope>
</reference>
<reference key="5">
    <citation type="journal article" date="2019" name="J. Proteome Res.">
        <title>Cell Type-Specific Expression of Testis Elevated Genes Based on Transcriptomics and Antibody-Based Proteomics.</title>
        <authorList>
            <person name="Pineau C."/>
            <person name="Hikmet F."/>
            <person name="Zhang C."/>
            <person name="Oksvold P."/>
            <person name="Chen S."/>
            <person name="Fagerberg L."/>
            <person name="Uhlen M."/>
            <person name="Lindskog C."/>
        </authorList>
    </citation>
    <scope>SUBCELLULAR LOCATION</scope>
</reference>
<keyword id="KW-0963">Cytoplasm</keyword>
<keyword id="KW-1267">Proteomics identification</keyword>
<keyword id="KW-1185">Reference proteome</keyword>
<keyword id="KW-0964">Secreted</keyword>
<keyword id="KW-0732">Signal</keyword>
<comment type="function">
    <text evidence="3">Involved in oocyte maturation.</text>
</comment>
<comment type="interaction">
    <interactant intactId="EBI-25888682">
        <id>Q86WS3</id>
    </interactant>
    <interactant intactId="EBI-466029">
        <id>P42858</id>
        <label>HTT</label>
    </interactant>
    <organismsDiffer>false</organismsDiffer>
    <experiments>9</experiments>
</comment>
<comment type="interaction">
    <interactant intactId="EBI-25888682">
        <id>Q86WS3</id>
    </interactant>
    <interactant intactId="EBI-11047108">
        <id>P49768-2</id>
        <label>PSEN1</label>
    </interactant>
    <organismsDiffer>false</organismsDiffer>
    <experiments>3</experiments>
</comment>
<comment type="interaction">
    <interactant intactId="EBI-25888682">
        <id>Q86WS3</id>
    </interactant>
    <interactant intactId="EBI-985879">
        <id>P37840</id>
        <label>SNCA</label>
    </interactant>
    <organismsDiffer>false</organismsDiffer>
    <experiments>3</experiments>
</comment>
<comment type="subcellular location">
    <subcellularLocation>
        <location evidence="3">Secreted</location>
    </subcellularLocation>
    <subcellularLocation>
        <location evidence="2">Cytoplasm</location>
    </subcellularLocation>
</comment>
<comment type="tissue specificity">
    <text evidence="3">Highly expressed in oocytes.</text>
</comment>
<comment type="similarity">
    <text evidence="4">Belongs to the PLAC1 family.</text>
</comment>
<comment type="caution">
    <text evidence="3">Unlike human OOSP2, mouse OOSP2 seems not participate in folliculogenesis and oocyte maturation.</text>
</comment>
<comment type="sequence caution" evidence="4">
    <conflict type="erroneous gene model prediction">
        <sequence resource="EMBL" id="AP000790"/>
    </conflict>
</comment>
<sequence>MALEVLMLLAVLIWTGAENLHVKISCSLDWLMVSVIPVAESRNLYIFADELHLGMGCPANRIHTYVYEFIYLVRDCGIRTRVVSEETLLFQTELYFTPRNIDHDPQEIHLECSTSRKSVWLTPVSTENEIKLDPSPFIADFQTTAEELGLLSSSPNLL</sequence>
<evidence type="ECO:0000255" key="1"/>
<evidence type="ECO:0000269" key="2">
    <source>
    </source>
</evidence>
<evidence type="ECO:0000269" key="3">
    <source>
    </source>
</evidence>
<evidence type="ECO:0000305" key="4"/>
<name>OOSP2_HUMAN</name>
<organism>
    <name type="scientific">Homo sapiens</name>
    <name type="common">Human</name>
    <dbReference type="NCBI Taxonomy" id="9606"/>
    <lineage>
        <taxon>Eukaryota</taxon>
        <taxon>Metazoa</taxon>
        <taxon>Chordata</taxon>
        <taxon>Craniata</taxon>
        <taxon>Vertebrata</taxon>
        <taxon>Euteleostomi</taxon>
        <taxon>Mammalia</taxon>
        <taxon>Eutheria</taxon>
        <taxon>Euarchontoglires</taxon>
        <taxon>Primates</taxon>
        <taxon>Haplorrhini</taxon>
        <taxon>Catarrhini</taxon>
        <taxon>Hominidae</taxon>
        <taxon>Homo</taxon>
    </lineage>
</organism>
<dbReference type="EMBL" id="AK093517">
    <property type="protein sequence ID" value="BAC04191.1"/>
    <property type="molecule type" value="mRNA"/>
</dbReference>
<dbReference type="EMBL" id="AP000790">
    <property type="status" value="NOT_ANNOTATED_CDS"/>
    <property type="molecule type" value="Genomic_DNA"/>
</dbReference>
<dbReference type="EMBL" id="BC036256">
    <property type="protein sequence ID" value="AAH36256.1"/>
    <property type="molecule type" value="mRNA"/>
</dbReference>
<dbReference type="EMBL" id="BC048121">
    <property type="protein sequence ID" value="AAH48121.1"/>
    <property type="molecule type" value="mRNA"/>
</dbReference>
<dbReference type="CCDS" id="CCDS7979.1"/>
<dbReference type="RefSeq" id="NP_776162.2">
    <property type="nucleotide sequence ID" value="NM_173801.4"/>
</dbReference>
<dbReference type="SMR" id="Q86WS3"/>
<dbReference type="BioGRID" id="128614">
    <property type="interactions" value="1"/>
</dbReference>
<dbReference type="FunCoup" id="Q86WS3">
    <property type="interactions" value="1"/>
</dbReference>
<dbReference type="IntAct" id="Q86WS3">
    <property type="interactions" value="3"/>
</dbReference>
<dbReference type="STRING" id="9606.ENSP00000278855"/>
<dbReference type="iPTMnet" id="Q86WS3"/>
<dbReference type="PhosphoSitePlus" id="Q86WS3"/>
<dbReference type="BioMuta" id="OOSP2"/>
<dbReference type="MassIVE" id="Q86WS3"/>
<dbReference type="PaxDb" id="9606-ENSP00000278855"/>
<dbReference type="PeptideAtlas" id="Q86WS3"/>
<dbReference type="TopDownProteomics" id="Q86WS3"/>
<dbReference type="Antibodypedia" id="27843">
    <property type="antibodies" value="56 antibodies from 17 providers"/>
</dbReference>
<dbReference type="DNASU" id="219990"/>
<dbReference type="Ensembl" id="ENST00000278855.7">
    <property type="protein sequence ID" value="ENSP00000278855.2"/>
    <property type="gene ID" value="ENSG00000149507.7"/>
</dbReference>
<dbReference type="Ensembl" id="ENST00000647205.2">
    <property type="protein sequence ID" value="ENSP00000494787.1"/>
    <property type="gene ID" value="ENSG00000285422.2"/>
</dbReference>
<dbReference type="GeneID" id="219990"/>
<dbReference type="KEGG" id="hsa:219990"/>
<dbReference type="MANE-Select" id="ENST00000278855.7">
    <property type="protein sequence ID" value="ENSP00000278855.2"/>
    <property type="RefSeq nucleotide sequence ID" value="NM_173801.5"/>
    <property type="RefSeq protein sequence ID" value="NP_776162.2"/>
</dbReference>
<dbReference type="UCSC" id="uc001nol.4">
    <property type="organism name" value="human"/>
</dbReference>
<dbReference type="AGR" id="HGNC:26699"/>
<dbReference type="CTD" id="219990"/>
<dbReference type="GeneCards" id="OOSP2"/>
<dbReference type="HGNC" id="HGNC:26699">
    <property type="gene designation" value="OOSP2"/>
</dbReference>
<dbReference type="HPA" id="ENSG00000149507">
    <property type="expression patterns" value="Tissue enriched (testis)"/>
</dbReference>
<dbReference type="MIM" id="620263">
    <property type="type" value="gene"/>
</dbReference>
<dbReference type="neXtProt" id="NX_Q86WS3"/>
<dbReference type="OpenTargets" id="ENSG00000149507"/>
<dbReference type="PharmGKB" id="PA162399666"/>
<dbReference type="VEuPathDB" id="HostDB:ENSG00000149507"/>
<dbReference type="eggNOG" id="ENOG502T865">
    <property type="taxonomic scope" value="Eukaryota"/>
</dbReference>
<dbReference type="GeneTree" id="ENSGT00530000064049"/>
<dbReference type="HOGENOM" id="CLU_1717534_0_0_1"/>
<dbReference type="InParanoid" id="Q86WS3"/>
<dbReference type="OMA" id="AALIWPC"/>
<dbReference type="OrthoDB" id="9829838at2759"/>
<dbReference type="PAN-GO" id="Q86WS3">
    <property type="GO annotations" value="0 GO annotations based on evolutionary models"/>
</dbReference>
<dbReference type="PhylomeDB" id="Q86WS3"/>
<dbReference type="TreeFam" id="TF338479"/>
<dbReference type="PathwayCommons" id="Q86WS3"/>
<dbReference type="SignaLink" id="Q86WS3"/>
<dbReference type="BioGRID-ORCS" id="219990">
    <property type="hits" value="8 hits in 1128 CRISPR screens"/>
</dbReference>
<dbReference type="GenomeRNAi" id="219990"/>
<dbReference type="Pharos" id="Q86WS3">
    <property type="development level" value="Tdark"/>
</dbReference>
<dbReference type="PRO" id="PR:Q86WS3"/>
<dbReference type="Proteomes" id="UP000005640">
    <property type="component" value="Chromosome 11"/>
</dbReference>
<dbReference type="RNAct" id="Q86WS3">
    <property type="molecule type" value="protein"/>
</dbReference>
<dbReference type="Bgee" id="ENSG00000149507">
    <property type="expression patterns" value="Expressed in right testis and 19 other cell types or tissues"/>
</dbReference>
<dbReference type="ExpressionAtlas" id="Q86WS3">
    <property type="expression patterns" value="baseline and differential"/>
</dbReference>
<dbReference type="GO" id="GO:0005737">
    <property type="term" value="C:cytoplasm"/>
    <property type="evidence" value="ECO:0000314"/>
    <property type="project" value="UniProtKB"/>
</dbReference>
<dbReference type="GO" id="GO:0005576">
    <property type="term" value="C:extracellular region"/>
    <property type="evidence" value="ECO:0007669"/>
    <property type="project" value="UniProtKB-SubCell"/>
</dbReference>
<dbReference type="GO" id="GO:0001556">
    <property type="term" value="P:oocyte maturation"/>
    <property type="evidence" value="ECO:0000315"/>
    <property type="project" value="UniProtKB"/>
</dbReference>
<dbReference type="Gene3D" id="2.60.40.3210">
    <property type="entry name" value="Zona pellucida, ZP-N domain"/>
    <property type="match status" value="1"/>
</dbReference>
<dbReference type="InterPro" id="IPR033222">
    <property type="entry name" value="PLAC1_fam"/>
</dbReference>
<dbReference type="PANTHER" id="PTHR14380:SF7">
    <property type="entry name" value="OOCYTE-SECRETED PROTEIN 2"/>
    <property type="match status" value="1"/>
</dbReference>
<dbReference type="PANTHER" id="PTHR14380">
    <property type="entry name" value="PLACENTA-SPECIFIC PROTEIN 1"/>
    <property type="match status" value="1"/>
</dbReference>
<gene>
    <name type="primary">OOSP2</name>
    <name type="synonym">PLAC1L</name>
    <name type="synonym">TMEM122</name>
</gene>
<feature type="signal peptide" evidence="1">
    <location>
        <begin position="1"/>
        <end position="17"/>
    </location>
</feature>
<feature type="chain" id="PRO_0000251150" description="Oocyte-secreted protein 2">
    <location>
        <begin position="18"/>
        <end position="158"/>
    </location>
</feature>
<feature type="sequence conflict" description="In Ref. 1; BAC04191." evidence="4" ref="1">
    <original>V</original>
    <variation>A</variation>
    <location>
        <position position="33"/>
    </location>
</feature>
<proteinExistence type="evidence at protein level"/>
<accession>Q86WS3</accession>
<accession>E9PJA4</accession>
<accession>Q8N9U6</accession>
<protein>
    <recommendedName>
        <fullName>Oocyte-secreted protein 2</fullName>
    </recommendedName>
    <alternativeName>
        <fullName>Placenta-specific 1-like protein</fullName>
    </alternativeName>
    <alternativeName>
        <fullName>Protein TMEM122</fullName>
    </alternativeName>
</protein>